<sequence length="443" mass="50176">MESLASLYKNHIATLQERTRDALARFKLDALLIHSGELFNVFLDDHPYPFKVNPQFKAWVPVTQVPNCWLLVDGVNKPKLWFYLPVDYWHNVEPLPTSFWTEDVEVIALPKADGIGSLLPAARGNIGYIGPVPERALQLGIEASNINPKGVIDYLHYYRSFKTEYELACMREAQKMAVNGHRAAEEAFRSGMSEFDINIAYLTATGHRDTDVPYSNIVALNEHAAVLHYTKLDHQAPEEMRSFLLDAGAEYNGYAADLTRTWSAKSDNDYAQLVKDVNDEQLALIATMKAGVSYVDYHIQFHQRIAKLLRKHQIITDMSEEAMVENDLTGPFMPHGIGHPLGLQVHDVAGFMQDDSGTHLAAPAKYPYLRCTRILQPGMVLTIEPGIYFIESLLAPWREGQFSKHFNWQKIEALKPFGGIRIEDNVVIHENNVENMTRDLKLA</sequence>
<keyword id="KW-0224">Dipeptidase</keyword>
<keyword id="KW-0378">Hydrolase</keyword>
<keyword id="KW-0464">Manganese</keyword>
<keyword id="KW-0479">Metal-binding</keyword>
<keyword id="KW-0482">Metalloprotease</keyword>
<keyword id="KW-0645">Protease</keyword>
<feature type="chain" id="PRO_1000140315" description="Xaa-Pro dipeptidase">
    <location>
        <begin position="1"/>
        <end position="443"/>
    </location>
</feature>
<feature type="binding site" evidence="1">
    <location>
        <position position="246"/>
    </location>
    <ligand>
        <name>Mn(2+)</name>
        <dbReference type="ChEBI" id="CHEBI:29035"/>
        <label>2</label>
    </ligand>
</feature>
<feature type="binding site" evidence="1">
    <location>
        <position position="257"/>
    </location>
    <ligand>
        <name>Mn(2+)</name>
        <dbReference type="ChEBI" id="CHEBI:29035"/>
        <label>1</label>
    </ligand>
</feature>
<feature type="binding site" evidence="1">
    <location>
        <position position="257"/>
    </location>
    <ligand>
        <name>Mn(2+)</name>
        <dbReference type="ChEBI" id="CHEBI:29035"/>
        <label>2</label>
    </ligand>
</feature>
<feature type="binding site" evidence="1">
    <location>
        <position position="339"/>
    </location>
    <ligand>
        <name>Mn(2+)</name>
        <dbReference type="ChEBI" id="CHEBI:29035"/>
        <label>1</label>
    </ligand>
</feature>
<feature type="binding site" evidence="1">
    <location>
        <position position="384"/>
    </location>
    <ligand>
        <name>Mn(2+)</name>
        <dbReference type="ChEBI" id="CHEBI:29035"/>
        <label>1</label>
    </ligand>
</feature>
<feature type="binding site" evidence="1">
    <location>
        <position position="423"/>
    </location>
    <ligand>
        <name>Mn(2+)</name>
        <dbReference type="ChEBI" id="CHEBI:29035"/>
        <label>1</label>
    </ligand>
</feature>
<feature type="binding site" evidence="1">
    <location>
        <position position="423"/>
    </location>
    <ligand>
        <name>Mn(2+)</name>
        <dbReference type="ChEBI" id="CHEBI:29035"/>
        <label>2</label>
    </ligand>
</feature>
<name>PEPQ_ECODH</name>
<proteinExistence type="inferred from homology"/>
<evidence type="ECO:0000255" key="1">
    <source>
        <dbReference type="HAMAP-Rule" id="MF_01279"/>
    </source>
</evidence>
<reference key="1">
    <citation type="journal article" date="2008" name="J. Bacteriol.">
        <title>The complete genome sequence of Escherichia coli DH10B: insights into the biology of a laboratory workhorse.</title>
        <authorList>
            <person name="Durfee T."/>
            <person name="Nelson R."/>
            <person name="Baldwin S."/>
            <person name="Plunkett G. III"/>
            <person name="Burland V."/>
            <person name="Mau B."/>
            <person name="Petrosino J.F."/>
            <person name="Qin X."/>
            <person name="Muzny D.M."/>
            <person name="Ayele M."/>
            <person name="Gibbs R.A."/>
            <person name="Csorgo B."/>
            <person name="Posfai G."/>
            <person name="Weinstock G.M."/>
            <person name="Blattner F.R."/>
        </authorList>
    </citation>
    <scope>NUCLEOTIDE SEQUENCE [LARGE SCALE GENOMIC DNA]</scope>
    <source>
        <strain>K12 / DH10B</strain>
    </source>
</reference>
<organism>
    <name type="scientific">Escherichia coli (strain K12 / DH10B)</name>
    <dbReference type="NCBI Taxonomy" id="316385"/>
    <lineage>
        <taxon>Bacteria</taxon>
        <taxon>Pseudomonadati</taxon>
        <taxon>Pseudomonadota</taxon>
        <taxon>Gammaproteobacteria</taxon>
        <taxon>Enterobacterales</taxon>
        <taxon>Enterobacteriaceae</taxon>
        <taxon>Escherichia</taxon>
    </lineage>
</organism>
<protein>
    <recommendedName>
        <fullName evidence="1">Xaa-Pro dipeptidase</fullName>
        <shortName evidence="1">X-Pro dipeptidase</shortName>
        <ecNumber evidence="1">3.4.13.9</ecNumber>
    </recommendedName>
    <alternativeName>
        <fullName evidence="1">Imidodipeptidase</fullName>
    </alternativeName>
    <alternativeName>
        <fullName evidence="1">Proline dipeptidase</fullName>
        <shortName evidence="1">Prolidase</shortName>
    </alternativeName>
</protein>
<comment type="function">
    <text evidence="1">Splits dipeptides with a prolyl residue in the C-terminal position.</text>
</comment>
<comment type="catalytic activity">
    <reaction evidence="1">
        <text>Xaa-L-Pro dipeptide + H2O = an L-alpha-amino acid + L-proline</text>
        <dbReference type="Rhea" id="RHEA:76407"/>
        <dbReference type="ChEBI" id="CHEBI:15377"/>
        <dbReference type="ChEBI" id="CHEBI:59869"/>
        <dbReference type="ChEBI" id="CHEBI:60039"/>
        <dbReference type="ChEBI" id="CHEBI:195196"/>
        <dbReference type="EC" id="3.4.13.9"/>
    </reaction>
</comment>
<comment type="cofactor">
    <cofactor evidence="1">
        <name>Mn(2+)</name>
        <dbReference type="ChEBI" id="CHEBI:29035"/>
    </cofactor>
    <text evidence="1">Binds 2 manganese ions per subunit.</text>
</comment>
<comment type="similarity">
    <text evidence="1">Belongs to the peptidase M24B family. Bacterial-type prolidase subfamily.</text>
</comment>
<dbReference type="EC" id="3.4.13.9" evidence="1"/>
<dbReference type="EMBL" id="CP000948">
    <property type="protein sequence ID" value="ACB04867.1"/>
    <property type="molecule type" value="Genomic_DNA"/>
</dbReference>
<dbReference type="RefSeq" id="WP_000444561.1">
    <property type="nucleotide sequence ID" value="NC_010473.1"/>
</dbReference>
<dbReference type="SMR" id="B1XAK9"/>
<dbReference type="MEROPS" id="M24.003"/>
<dbReference type="GeneID" id="86861950"/>
<dbReference type="KEGG" id="ecd:ECDH10B_4036"/>
<dbReference type="HOGENOM" id="CLU_050675_0_0_6"/>
<dbReference type="GO" id="GO:0005829">
    <property type="term" value="C:cytosol"/>
    <property type="evidence" value="ECO:0007669"/>
    <property type="project" value="TreeGrafter"/>
</dbReference>
<dbReference type="GO" id="GO:0004177">
    <property type="term" value="F:aminopeptidase activity"/>
    <property type="evidence" value="ECO:0007669"/>
    <property type="project" value="TreeGrafter"/>
</dbReference>
<dbReference type="GO" id="GO:0046872">
    <property type="term" value="F:metal ion binding"/>
    <property type="evidence" value="ECO:0007669"/>
    <property type="project" value="UniProtKB-KW"/>
</dbReference>
<dbReference type="GO" id="GO:0008235">
    <property type="term" value="F:metalloexopeptidase activity"/>
    <property type="evidence" value="ECO:0007669"/>
    <property type="project" value="UniProtKB-UniRule"/>
</dbReference>
<dbReference type="GO" id="GO:0016795">
    <property type="term" value="F:phosphoric triester hydrolase activity"/>
    <property type="evidence" value="ECO:0007669"/>
    <property type="project" value="InterPro"/>
</dbReference>
<dbReference type="GO" id="GO:0102009">
    <property type="term" value="F:proline dipeptidase activity"/>
    <property type="evidence" value="ECO:0007669"/>
    <property type="project" value="UniProtKB-EC"/>
</dbReference>
<dbReference type="GO" id="GO:0006508">
    <property type="term" value="P:proteolysis"/>
    <property type="evidence" value="ECO:0007669"/>
    <property type="project" value="UniProtKB-KW"/>
</dbReference>
<dbReference type="CDD" id="cd01087">
    <property type="entry name" value="Prolidase"/>
    <property type="match status" value="1"/>
</dbReference>
<dbReference type="FunFam" id="3.40.350.10:FF:000002">
    <property type="entry name" value="Xaa-Pro dipeptidase"/>
    <property type="match status" value="1"/>
</dbReference>
<dbReference type="FunFam" id="3.90.230.10:FF:000006">
    <property type="entry name" value="Xaa-Pro dipeptidase"/>
    <property type="match status" value="1"/>
</dbReference>
<dbReference type="Gene3D" id="3.90.230.10">
    <property type="entry name" value="Creatinase/methionine aminopeptidase superfamily"/>
    <property type="match status" value="1"/>
</dbReference>
<dbReference type="Gene3D" id="3.40.350.10">
    <property type="entry name" value="Creatinase/prolidase N-terminal domain"/>
    <property type="match status" value="1"/>
</dbReference>
<dbReference type="HAMAP" id="MF_01279">
    <property type="entry name" value="X_Pro_dipeptid"/>
    <property type="match status" value="1"/>
</dbReference>
<dbReference type="InterPro" id="IPR029149">
    <property type="entry name" value="Creatin/AminoP/Spt16_N"/>
</dbReference>
<dbReference type="InterPro" id="IPR036005">
    <property type="entry name" value="Creatinase/aminopeptidase-like"/>
</dbReference>
<dbReference type="InterPro" id="IPR048819">
    <property type="entry name" value="PepQ_N"/>
</dbReference>
<dbReference type="InterPro" id="IPR000994">
    <property type="entry name" value="Pept_M24"/>
</dbReference>
<dbReference type="InterPro" id="IPR001131">
    <property type="entry name" value="Peptidase_M24B_aminopep-P_CS"/>
</dbReference>
<dbReference type="InterPro" id="IPR052433">
    <property type="entry name" value="X-Pro_dipept-like"/>
</dbReference>
<dbReference type="InterPro" id="IPR022846">
    <property type="entry name" value="X_Pro_dipept"/>
</dbReference>
<dbReference type="NCBIfam" id="NF010133">
    <property type="entry name" value="PRK13607.1"/>
    <property type="match status" value="1"/>
</dbReference>
<dbReference type="PANTHER" id="PTHR43226">
    <property type="entry name" value="XAA-PRO AMINOPEPTIDASE 3"/>
    <property type="match status" value="1"/>
</dbReference>
<dbReference type="PANTHER" id="PTHR43226:SF8">
    <property type="entry name" value="XAA-PRO DIPEPTIDASE"/>
    <property type="match status" value="1"/>
</dbReference>
<dbReference type="Pfam" id="PF21216">
    <property type="entry name" value="PepQ_N"/>
    <property type="match status" value="1"/>
</dbReference>
<dbReference type="Pfam" id="PF00557">
    <property type="entry name" value="Peptidase_M24"/>
    <property type="match status" value="1"/>
</dbReference>
<dbReference type="SUPFAM" id="SSF55920">
    <property type="entry name" value="Creatinase/aminopeptidase"/>
    <property type="match status" value="1"/>
</dbReference>
<dbReference type="PROSITE" id="PS00491">
    <property type="entry name" value="PROLINE_PEPTIDASE"/>
    <property type="match status" value="1"/>
</dbReference>
<accession>B1XAK9</accession>
<gene>
    <name evidence="1" type="primary">pepQ</name>
    <name type="ordered locus">ECDH10B_4036</name>
</gene>